<sequence length="168" mass="18630">MVEDILAPGLRVVFCGINPGLSSAGTGFPFAHPANRFWKVIYQAGFTDRQLKPQEAQHLLDYRCGVTKLVDRPTVQANEVSKQELHAGGRKLIEKIEDYQPQALAILGKQAYEQGFSQRGAQWGKQTLTIGSTQIWVLPNPSGLSRVSLEKLVEAYRELDQALVVRGL</sequence>
<dbReference type="EC" id="3.2.2.28" evidence="1"/>
<dbReference type="EMBL" id="CP000970">
    <property type="protein sequence ID" value="ACB18169.1"/>
    <property type="molecule type" value="Genomic_DNA"/>
</dbReference>
<dbReference type="RefSeq" id="WP_000228936.1">
    <property type="nucleotide sequence ID" value="NC_010498.1"/>
</dbReference>
<dbReference type="SMR" id="B1LF61"/>
<dbReference type="KEGG" id="ecm:EcSMS35_3362"/>
<dbReference type="HOGENOM" id="CLU_042829_3_1_6"/>
<dbReference type="Proteomes" id="UP000007011">
    <property type="component" value="Chromosome"/>
</dbReference>
<dbReference type="GO" id="GO:0005737">
    <property type="term" value="C:cytoplasm"/>
    <property type="evidence" value="ECO:0007669"/>
    <property type="project" value="UniProtKB-SubCell"/>
</dbReference>
<dbReference type="GO" id="GO:0003677">
    <property type="term" value="F:DNA binding"/>
    <property type="evidence" value="ECO:0007669"/>
    <property type="project" value="UniProtKB-KW"/>
</dbReference>
<dbReference type="GO" id="GO:0008263">
    <property type="term" value="F:pyrimidine-specific mismatch base pair DNA N-glycosylase activity"/>
    <property type="evidence" value="ECO:0007669"/>
    <property type="project" value="UniProtKB-UniRule"/>
</dbReference>
<dbReference type="GO" id="GO:0004844">
    <property type="term" value="F:uracil DNA N-glycosylase activity"/>
    <property type="evidence" value="ECO:0007669"/>
    <property type="project" value="TreeGrafter"/>
</dbReference>
<dbReference type="GO" id="GO:0006285">
    <property type="term" value="P:base-excision repair, AP site formation"/>
    <property type="evidence" value="ECO:0007669"/>
    <property type="project" value="UniProtKB-UniRule"/>
</dbReference>
<dbReference type="CDD" id="cd10028">
    <property type="entry name" value="UDG-F2_TDG_MUG"/>
    <property type="match status" value="1"/>
</dbReference>
<dbReference type="FunFam" id="3.40.470.10:FF:000003">
    <property type="entry name" value="G/U mismatch-specific DNA glycosylase"/>
    <property type="match status" value="1"/>
</dbReference>
<dbReference type="Gene3D" id="3.40.470.10">
    <property type="entry name" value="Uracil-DNA glycosylase-like domain"/>
    <property type="match status" value="1"/>
</dbReference>
<dbReference type="HAMAP" id="MF_01956">
    <property type="entry name" value="MUG"/>
    <property type="match status" value="1"/>
</dbReference>
<dbReference type="InterPro" id="IPR015637">
    <property type="entry name" value="MUG/TDG"/>
</dbReference>
<dbReference type="InterPro" id="IPR023502">
    <property type="entry name" value="MUG_bact"/>
</dbReference>
<dbReference type="InterPro" id="IPR005122">
    <property type="entry name" value="Uracil-DNA_glycosylase-like"/>
</dbReference>
<dbReference type="InterPro" id="IPR036895">
    <property type="entry name" value="Uracil-DNA_glycosylase-like_sf"/>
</dbReference>
<dbReference type="NCBIfam" id="NF007570">
    <property type="entry name" value="PRK10201.1"/>
    <property type="match status" value="1"/>
</dbReference>
<dbReference type="PANTHER" id="PTHR12159">
    <property type="entry name" value="G/T AND G/U MISMATCH-SPECIFIC DNA GLYCOSYLASE"/>
    <property type="match status" value="1"/>
</dbReference>
<dbReference type="PANTHER" id="PTHR12159:SF9">
    <property type="entry name" value="G_T MISMATCH-SPECIFIC THYMINE DNA GLYCOSYLASE"/>
    <property type="match status" value="1"/>
</dbReference>
<dbReference type="Pfam" id="PF03167">
    <property type="entry name" value="UDG"/>
    <property type="match status" value="1"/>
</dbReference>
<dbReference type="SUPFAM" id="SSF52141">
    <property type="entry name" value="Uracil-DNA glycosylase-like"/>
    <property type="match status" value="1"/>
</dbReference>
<name>MUG_ECOSM</name>
<gene>
    <name evidence="1" type="primary">mug</name>
    <name type="ordered locus">EcSMS35_3362</name>
</gene>
<evidence type="ECO:0000255" key="1">
    <source>
        <dbReference type="HAMAP-Rule" id="MF_01956"/>
    </source>
</evidence>
<keyword id="KW-0963">Cytoplasm</keyword>
<keyword id="KW-0227">DNA damage</keyword>
<keyword id="KW-0228">DNA excision</keyword>
<keyword id="KW-0234">DNA repair</keyword>
<keyword id="KW-0238">DNA-binding</keyword>
<keyword id="KW-0378">Hydrolase</keyword>
<feature type="chain" id="PRO_1000188959" description="G/U mismatch-specific DNA glycosylase">
    <location>
        <begin position="1"/>
        <end position="168"/>
    </location>
</feature>
<organism>
    <name type="scientific">Escherichia coli (strain SMS-3-5 / SECEC)</name>
    <dbReference type="NCBI Taxonomy" id="439855"/>
    <lineage>
        <taxon>Bacteria</taxon>
        <taxon>Pseudomonadati</taxon>
        <taxon>Pseudomonadota</taxon>
        <taxon>Gammaproteobacteria</taxon>
        <taxon>Enterobacterales</taxon>
        <taxon>Enterobacteriaceae</taxon>
        <taxon>Escherichia</taxon>
    </lineage>
</organism>
<proteinExistence type="inferred from homology"/>
<accession>B1LF61</accession>
<comment type="function">
    <text evidence="1">Excises ethenocytosine and uracil, which can arise by alkylation or deamination of cytosine, respectively, from the corresponding mispairs with guanine in ds-DNA. It is capable of hydrolyzing the carbon-nitrogen bond between the sugar-phosphate backbone of the DNA and the mispaired base. The complementary strand guanine functions in substrate recognition. Required for DNA damage lesion repair in stationary-phase cells.</text>
</comment>
<comment type="catalytic activity">
    <reaction evidence="1">
        <text>Specifically hydrolyzes mismatched double-stranded DNA and polynucleotides, releasing free uracil.</text>
        <dbReference type="EC" id="3.2.2.28"/>
    </reaction>
</comment>
<comment type="subunit">
    <text evidence="1">Binds DNA as a monomer.</text>
</comment>
<comment type="subcellular location">
    <subcellularLocation>
        <location evidence="1">Cytoplasm</location>
    </subcellularLocation>
</comment>
<comment type="similarity">
    <text evidence="1">Belongs to the uracil-DNA glycosylase (UDG) superfamily. TDG/mug family.</text>
</comment>
<reference key="1">
    <citation type="journal article" date="2008" name="J. Bacteriol.">
        <title>Insights into the environmental resistance gene pool from the genome sequence of the multidrug-resistant environmental isolate Escherichia coli SMS-3-5.</title>
        <authorList>
            <person name="Fricke W.F."/>
            <person name="Wright M.S."/>
            <person name="Lindell A.H."/>
            <person name="Harkins D.M."/>
            <person name="Baker-Austin C."/>
            <person name="Ravel J."/>
            <person name="Stepanauskas R."/>
        </authorList>
    </citation>
    <scope>NUCLEOTIDE SEQUENCE [LARGE SCALE GENOMIC DNA]</scope>
    <source>
        <strain>SMS-3-5 / SECEC</strain>
    </source>
</reference>
<protein>
    <recommendedName>
        <fullName evidence="1">G/U mismatch-specific DNA glycosylase</fullName>
        <ecNumber evidence="1">3.2.2.28</ecNumber>
    </recommendedName>
    <alternativeName>
        <fullName evidence="1">Double-strand-specific uracil glycosylase</fullName>
    </alternativeName>
    <alternativeName>
        <fullName evidence="1">Mismatch-specific uracil DNA-glycosylase</fullName>
        <shortName evidence="1">MUG</shortName>
    </alternativeName>
</protein>